<sequence>MGKPSSKEERVHHVFENIYSKYDSMNSIISFQRHKSWRKDTMKRMNVQAGETALDVCCGTGDWSISLSEAVGQTGKVIGLDFSKNMLSIAKQKKQDLQLNQLELVHGNAMELPYEENSFDYVTIGFGLRNVPDYMTVLEEMYRVVKPGGKVVCIETSQPTLIGYRQAYYFYFKFIMPILGKLIAKSYKEYSWLQESAKDFPGKKELKEMFLNAGFDKVEMKSYTGGVAAMHMGFKASQ</sequence>
<accession>Q8CWG0</accession>
<dbReference type="EC" id="2.1.1.163" evidence="1"/>
<dbReference type="EMBL" id="BA000028">
    <property type="protein sequence ID" value="BAC13745.1"/>
    <property type="molecule type" value="Genomic_DNA"/>
</dbReference>
<dbReference type="RefSeq" id="WP_011066188.1">
    <property type="nucleotide sequence ID" value="NC_004193.1"/>
</dbReference>
<dbReference type="SMR" id="Q8CWG0"/>
<dbReference type="STRING" id="221109.gene:10734029"/>
<dbReference type="KEGG" id="oih:OB1789"/>
<dbReference type="eggNOG" id="COG2226">
    <property type="taxonomic scope" value="Bacteria"/>
</dbReference>
<dbReference type="HOGENOM" id="CLU_037990_0_0_9"/>
<dbReference type="OrthoDB" id="9808140at2"/>
<dbReference type="PhylomeDB" id="Q8CWG0"/>
<dbReference type="UniPathway" id="UPA00079">
    <property type="reaction ID" value="UER00169"/>
</dbReference>
<dbReference type="Proteomes" id="UP000000822">
    <property type="component" value="Chromosome"/>
</dbReference>
<dbReference type="GO" id="GO:0043770">
    <property type="term" value="F:demethylmenaquinone methyltransferase activity"/>
    <property type="evidence" value="ECO:0007669"/>
    <property type="project" value="UniProtKB-UniRule"/>
</dbReference>
<dbReference type="GO" id="GO:0009234">
    <property type="term" value="P:menaquinone biosynthetic process"/>
    <property type="evidence" value="ECO:0007669"/>
    <property type="project" value="UniProtKB-UniRule"/>
</dbReference>
<dbReference type="GO" id="GO:0032259">
    <property type="term" value="P:methylation"/>
    <property type="evidence" value="ECO:0007669"/>
    <property type="project" value="UniProtKB-KW"/>
</dbReference>
<dbReference type="CDD" id="cd02440">
    <property type="entry name" value="AdoMet_MTases"/>
    <property type="match status" value="1"/>
</dbReference>
<dbReference type="FunFam" id="3.40.50.150:FF:000086">
    <property type="entry name" value="Demethylmenaquinone methyltransferase"/>
    <property type="match status" value="1"/>
</dbReference>
<dbReference type="Gene3D" id="3.40.50.150">
    <property type="entry name" value="Vaccinia Virus protein VP39"/>
    <property type="match status" value="1"/>
</dbReference>
<dbReference type="HAMAP" id="MF_01813">
    <property type="entry name" value="MenG_UbiE_methyltr"/>
    <property type="match status" value="1"/>
</dbReference>
<dbReference type="InterPro" id="IPR014122">
    <property type="entry name" value="MenG_heptapren"/>
</dbReference>
<dbReference type="InterPro" id="IPR029063">
    <property type="entry name" value="SAM-dependent_MTases_sf"/>
</dbReference>
<dbReference type="InterPro" id="IPR004033">
    <property type="entry name" value="UbiE/COQ5_MeTrFase"/>
</dbReference>
<dbReference type="InterPro" id="IPR023576">
    <property type="entry name" value="UbiE/COQ5_MeTrFase_CS"/>
</dbReference>
<dbReference type="NCBIfam" id="TIGR02752">
    <property type="entry name" value="MenG_heptapren"/>
    <property type="match status" value="1"/>
</dbReference>
<dbReference type="NCBIfam" id="TIGR01934">
    <property type="entry name" value="MenG_MenH_UbiE"/>
    <property type="match status" value="1"/>
</dbReference>
<dbReference type="NCBIfam" id="NF001243">
    <property type="entry name" value="PRK00216.1-4"/>
    <property type="match status" value="1"/>
</dbReference>
<dbReference type="NCBIfam" id="NF001244">
    <property type="entry name" value="PRK00216.1-5"/>
    <property type="match status" value="1"/>
</dbReference>
<dbReference type="PANTHER" id="PTHR43591:SF24">
    <property type="entry name" value="2-METHOXY-6-POLYPRENYL-1,4-BENZOQUINOL METHYLASE, MITOCHONDRIAL"/>
    <property type="match status" value="1"/>
</dbReference>
<dbReference type="PANTHER" id="PTHR43591">
    <property type="entry name" value="METHYLTRANSFERASE"/>
    <property type="match status" value="1"/>
</dbReference>
<dbReference type="Pfam" id="PF01209">
    <property type="entry name" value="Ubie_methyltran"/>
    <property type="match status" value="1"/>
</dbReference>
<dbReference type="SUPFAM" id="SSF53335">
    <property type="entry name" value="S-adenosyl-L-methionine-dependent methyltransferases"/>
    <property type="match status" value="1"/>
</dbReference>
<dbReference type="PROSITE" id="PS51608">
    <property type="entry name" value="SAM_MT_UBIE"/>
    <property type="match status" value="1"/>
</dbReference>
<dbReference type="PROSITE" id="PS01183">
    <property type="entry name" value="UBIE_1"/>
    <property type="match status" value="1"/>
</dbReference>
<dbReference type="PROSITE" id="PS01184">
    <property type="entry name" value="UBIE_2"/>
    <property type="match status" value="1"/>
</dbReference>
<keyword id="KW-0474">Menaquinone biosynthesis</keyword>
<keyword id="KW-0489">Methyltransferase</keyword>
<keyword id="KW-1185">Reference proteome</keyword>
<keyword id="KW-0949">S-adenosyl-L-methionine</keyword>
<keyword id="KW-0808">Transferase</keyword>
<feature type="chain" id="PRO_0000193304" description="Demethylmenaquinone methyltransferase">
    <location>
        <begin position="1"/>
        <end position="238"/>
    </location>
</feature>
<feature type="binding site" evidence="1">
    <location>
        <position position="60"/>
    </location>
    <ligand>
        <name>S-adenosyl-L-methionine</name>
        <dbReference type="ChEBI" id="CHEBI:59789"/>
    </ligand>
</feature>
<feature type="binding site" evidence="1">
    <location>
        <position position="81"/>
    </location>
    <ligand>
        <name>S-adenosyl-L-methionine</name>
        <dbReference type="ChEBI" id="CHEBI:59789"/>
    </ligand>
</feature>
<feature type="binding site" evidence="1">
    <location>
        <begin position="108"/>
        <end position="109"/>
    </location>
    <ligand>
        <name>S-adenosyl-L-methionine</name>
        <dbReference type="ChEBI" id="CHEBI:59789"/>
    </ligand>
</feature>
<proteinExistence type="inferred from homology"/>
<evidence type="ECO:0000255" key="1">
    <source>
        <dbReference type="HAMAP-Rule" id="MF_01813"/>
    </source>
</evidence>
<organism>
    <name type="scientific">Oceanobacillus iheyensis (strain DSM 14371 / CIP 107618 / JCM 11309 / KCTC 3954 / HTE831)</name>
    <dbReference type="NCBI Taxonomy" id="221109"/>
    <lineage>
        <taxon>Bacteria</taxon>
        <taxon>Bacillati</taxon>
        <taxon>Bacillota</taxon>
        <taxon>Bacilli</taxon>
        <taxon>Bacillales</taxon>
        <taxon>Bacillaceae</taxon>
        <taxon>Oceanobacillus</taxon>
    </lineage>
</organism>
<name>MENG_OCEIH</name>
<reference key="1">
    <citation type="journal article" date="2002" name="Nucleic Acids Res.">
        <title>Genome sequence of Oceanobacillus iheyensis isolated from the Iheya Ridge and its unexpected adaptive capabilities to extreme environments.</title>
        <authorList>
            <person name="Takami H."/>
            <person name="Takaki Y."/>
            <person name="Uchiyama I."/>
        </authorList>
    </citation>
    <scope>NUCLEOTIDE SEQUENCE [LARGE SCALE GENOMIC DNA]</scope>
    <source>
        <strain>DSM 14371 / CIP 107618 / JCM 11309 / KCTC 3954 / HTE831</strain>
    </source>
</reference>
<gene>
    <name evidence="1" type="primary">menG</name>
    <name type="ordered locus">OB1789</name>
</gene>
<protein>
    <recommendedName>
        <fullName evidence="1">Demethylmenaquinone methyltransferase</fullName>
        <ecNumber evidence="1">2.1.1.163</ecNumber>
    </recommendedName>
</protein>
<comment type="function">
    <text evidence="1">Methyltransferase required for the conversion of demethylmenaquinol (DMKH2) to menaquinol (MKH2).</text>
</comment>
<comment type="catalytic activity">
    <reaction evidence="1">
        <text>a 2-demethylmenaquinol + S-adenosyl-L-methionine = a menaquinol + S-adenosyl-L-homocysteine + H(+)</text>
        <dbReference type="Rhea" id="RHEA:42640"/>
        <dbReference type="Rhea" id="RHEA-COMP:9539"/>
        <dbReference type="Rhea" id="RHEA-COMP:9563"/>
        <dbReference type="ChEBI" id="CHEBI:15378"/>
        <dbReference type="ChEBI" id="CHEBI:18151"/>
        <dbReference type="ChEBI" id="CHEBI:55437"/>
        <dbReference type="ChEBI" id="CHEBI:57856"/>
        <dbReference type="ChEBI" id="CHEBI:59789"/>
        <dbReference type="EC" id="2.1.1.163"/>
    </reaction>
</comment>
<comment type="pathway">
    <text evidence="1">Quinol/quinone metabolism; menaquinone biosynthesis; menaquinol from 1,4-dihydroxy-2-naphthoate: step 2/2.</text>
</comment>
<comment type="similarity">
    <text evidence="1">Belongs to the class I-like SAM-binding methyltransferase superfamily. MenG/UbiE family.</text>
</comment>